<sequence length="267" mass="29916">MEDDSAPISGRSGSPDHVDDLFNYDFGLDELLGQAPSRTDSTEPKQTATHAMSGLGLGLDEEVKVTKKRQPIAKLDERRLLSQPGIPKLRRTAKAKLKFRGRGHEFSDAARLLNFYQLWLDNLFPRAKFADGLAMIERLGHSKRLQTIRREWIEEEKPQISTDIQAGSPQINLPADTQTDHTALASENRNTTSAKLQENLSNYVIPDGVQNSVDDTNLPALAEADERLFMSDDDFARLPDDQGAPDDDEWDALLREQEDLVFINTST</sequence>
<dbReference type="EMBL" id="DS027048">
    <property type="protein sequence ID" value="EAW13313.1"/>
    <property type="molecule type" value="Genomic_DNA"/>
</dbReference>
<dbReference type="RefSeq" id="XP_001274739.1">
    <property type="nucleotide sequence ID" value="XM_001274738.1"/>
</dbReference>
<dbReference type="SMR" id="A1C8Y9"/>
<dbReference type="STRING" id="344612.A1C8Y9"/>
<dbReference type="EnsemblFungi" id="EAW13313">
    <property type="protein sequence ID" value="EAW13313"/>
    <property type="gene ID" value="ACLA_053590"/>
</dbReference>
<dbReference type="GeneID" id="4707012"/>
<dbReference type="KEGG" id="act:ACLA_053590"/>
<dbReference type="VEuPathDB" id="FungiDB:ACLA_053590"/>
<dbReference type="eggNOG" id="KOG3004">
    <property type="taxonomic scope" value="Eukaryota"/>
</dbReference>
<dbReference type="HOGENOM" id="CLU_036204_0_0_1"/>
<dbReference type="OMA" id="ETPNMPN"/>
<dbReference type="OrthoDB" id="437078at2759"/>
<dbReference type="Proteomes" id="UP000006701">
    <property type="component" value="Unassembled WGS sequence"/>
</dbReference>
<dbReference type="GO" id="GO:0031298">
    <property type="term" value="C:replication fork protection complex"/>
    <property type="evidence" value="ECO:0007669"/>
    <property type="project" value="TreeGrafter"/>
</dbReference>
<dbReference type="GO" id="GO:0003677">
    <property type="term" value="F:DNA binding"/>
    <property type="evidence" value="ECO:0007669"/>
    <property type="project" value="TreeGrafter"/>
</dbReference>
<dbReference type="GO" id="GO:0006281">
    <property type="term" value="P:DNA repair"/>
    <property type="evidence" value="ECO:0007669"/>
    <property type="project" value="UniProtKB-KW"/>
</dbReference>
<dbReference type="GO" id="GO:0000076">
    <property type="term" value="P:DNA replication checkpoint signaling"/>
    <property type="evidence" value="ECO:0007669"/>
    <property type="project" value="InterPro"/>
</dbReference>
<dbReference type="GO" id="GO:0051321">
    <property type="term" value="P:meiotic cell cycle"/>
    <property type="evidence" value="ECO:0007669"/>
    <property type="project" value="UniProtKB-KW"/>
</dbReference>
<dbReference type="GO" id="GO:0043111">
    <property type="term" value="P:replication fork arrest"/>
    <property type="evidence" value="ECO:0007669"/>
    <property type="project" value="TreeGrafter"/>
</dbReference>
<dbReference type="GO" id="GO:0031297">
    <property type="term" value="P:replication fork processing"/>
    <property type="evidence" value="ECO:0007669"/>
    <property type="project" value="InterPro"/>
</dbReference>
<dbReference type="InterPro" id="IPR012923">
    <property type="entry name" value="Csm3"/>
</dbReference>
<dbReference type="InterPro" id="IPR040038">
    <property type="entry name" value="TIPIN/Csm3/Swi3"/>
</dbReference>
<dbReference type="PANTHER" id="PTHR13220">
    <property type="entry name" value="TIMELESS INTERACTING-RELATED"/>
    <property type="match status" value="1"/>
</dbReference>
<dbReference type="PANTHER" id="PTHR13220:SF11">
    <property type="entry name" value="TIMELESS-INTERACTING PROTEIN"/>
    <property type="match status" value="1"/>
</dbReference>
<dbReference type="Pfam" id="PF07962">
    <property type="entry name" value="Swi3"/>
    <property type="match status" value="1"/>
</dbReference>
<name>CSM3_ASPCL</name>
<protein>
    <recommendedName>
        <fullName>Chromosome segregation in meiosis protein 3</fullName>
    </recommendedName>
</protein>
<feature type="chain" id="PRO_0000301711" description="Chromosome segregation in meiosis protein 3">
    <location>
        <begin position="1"/>
        <end position="267"/>
    </location>
</feature>
<accession>A1C8Y9</accession>
<keyword id="KW-0131">Cell cycle</keyword>
<keyword id="KW-0227">DNA damage</keyword>
<keyword id="KW-0234">DNA repair</keyword>
<keyword id="KW-0236">DNA replication inhibitor</keyword>
<keyword id="KW-0469">Meiosis</keyword>
<keyword id="KW-0539">Nucleus</keyword>
<keyword id="KW-1185">Reference proteome</keyword>
<proteinExistence type="inferred from homology"/>
<evidence type="ECO:0000250" key="1"/>
<evidence type="ECO:0000305" key="2"/>
<reference key="1">
    <citation type="journal article" date="2008" name="PLoS Genet.">
        <title>Genomic islands in the pathogenic filamentous fungus Aspergillus fumigatus.</title>
        <authorList>
            <person name="Fedorova N.D."/>
            <person name="Khaldi N."/>
            <person name="Joardar V.S."/>
            <person name="Maiti R."/>
            <person name="Amedeo P."/>
            <person name="Anderson M.J."/>
            <person name="Crabtree J."/>
            <person name="Silva J.C."/>
            <person name="Badger J.H."/>
            <person name="Albarraq A."/>
            <person name="Angiuoli S."/>
            <person name="Bussey H."/>
            <person name="Bowyer P."/>
            <person name="Cotty P.J."/>
            <person name="Dyer P.S."/>
            <person name="Egan A."/>
            <person name="Galens K."/>
            <person name="Fraser-Liggett C.M."/>
            <person name="Haas B.J."/>
            <person name="Inman J.M."/>
            <person name="Kent R."/>
            <person name="Lemieux S."/>
            <person name="Malavazi I."/>
            <person name="Orvis J."/>
            <person name="Roemer T."/>
            <person name="Ronning C.M."/>
            <person name="Sundaram J.P."/>
            <person name="Sutton G."/>
            <person name="Turner G."/>
            <person name="Venter J.C."/>
            <person name="White O.R."/>
            <person name="Whitty B.R."/>
            <person name="Youngman P."/>
            <person name="Wolfe K.H."/>
            <person name="Goldman G.H."/>
            <person name="Wortman J.R."/>
            <person name="Jiang B."/>
            <person name="Denning D.W."/>
            <person name="Nierman W.C."/>
        </authorList>
    </citation>
    <scope>NUCLEOTIDE SEQUENCE [LARGE SCALE GENOMIC DNA]</scope>
    <source>
        <strain>ATCC 1007 / CBS 513.65 / DSM 816 / NCTC 3887 / NRRL 1 / QM 1276 / 107</strain>
    </source>
</reference>
<comment type="function">
    <text evidence="1">Forms a fork protection complex (FPC) with tof1 and which is required for chromosome segregation during meiosis and DNA damage repair. FPC coordinates leading and lagging strand synthesis and moves with the replication fork. FPC stabilizes replication forks in a configuration that is recognized by replication checkpoint sensors (By similarity).</text>
</comment>
<comment type="subunit">
    <text evidence="1">Component of the fork protection complex (FPC) consisting of tof1 and csm3.</text>
</comment>
<comment type="subcellular location">
    <subcellularLocation>
        <location evidence="1">Nucleus</location>
    </subcellularLocation>
</comment>
<comment type="similarity">
    <text evidence="2">Belongs to the CSM3 family.</text>
</comment>
<organism>
    <name type="scientific">Aspergillus clavatus (strain ATCC 1007 / CBS 513.65 / DSM 816 / NCTC 3887 / NRRL 1 / QM 1276 / 107)</name>
    <dbReference type="NCBI Taxonomy" id="344612"/>
    <lineage>
        <taxon>Eukaryota</taxon>
        <taxon>Fungi</taxon>
        <taxon>Dikarya</taxon>
        <taxon>Ascomycota</taxon>
        <taxon>Pezizomycotina</taxon>
        <taxon>Eurotiomycetes</taxon>
        <taxon>Eurotiomycetidae</taxon>
        <taxon>Eurotiales</taxon>
        <taxon>Aspergillaceae</taxon>
        <taxon>Aspergillus</taxon>
        <taxon>Aspergillus subgen. Fumigati</taxon>
    </lineage>
</organism>
<gene>
    <name type="primary">csm3</name>
    <name type="ORF">ACLA_053590</name>
</gene>